<comment type="function">
    <text evidence="1">ATP-dependent RNA helicase involved in mRNA turnover, and more specifically in mRNA decapping. Is involved in G1/S DNA-damage checkpoint recovery, probably through the regulation of the translational status of a subset of mRNAs. May also have a role in translation and mRNA nuclear export (By similarity).</text>
</comment>
<comment type="catalytic activity">
    <reaction>
        <text>ATP + H2O = ADP + phosphate + H(+)</text>
        <dbReference type="Rhea" id="RHEA:13065"/>
        <dbReference type="ChEBI" id="CHEBI:15377"/>
        <dbReference type="ChEBI" id="CHEBI:15378"/>
        <dbReference type="ChEBI" id="CHEBI:30616"/>
        <dbReference type="ChEBI" id="CHEBI:43474"/>
        <dbReference type="ChEBI" id="CHEBI:456216"/>
        <dbReference type="EC" id="3.6.4.13"/>
    </reaction>
</comment>
<comment type="subcellular location">
    <subcellularLocation>
        <location evidence="1">Cytoplasm</location>
        <location evidence="1">P-body</location>
    </subcellularLocation>
    <text evidence="1">Is concentrated in several cytoplasmic foci called P bodies (or cytoplasmic processing bodies) which represent sites of mRNA decapping and 5' to 3' exonucleotidic decay.</text>
</comment>
<comment type="domain">
    <text>The Q motif is unique to and characteristic of the DEAD box family of RNA helicases and controls ATP binding and hydrolysis.</text>
</comment>
<comment type="similarity">
    <text evidence="5">Belongs to the DEAD box helicase family. DDX6/DHH1 subfamily.</text>
</comment>
<feature type="chain" id="PRO_0000282461" description="ATP-dependent RNA helicase dhh1">
    <location>
        <begin position="1"/>
        <end position="503"/>
    </location>
</feature>
<feature type="domain" description="Helicase ATP-binding" evidence="2">
    <location>
        <begin position="78"/>
        <end position="248"/>
    </location>
</feature>
<feature type="domain" description="Helicase C-terminal" evidence="3">
    <location>
        <begin position="258"/>
        <end position="418"/>
    </location>
</feature>
<feature type="region of interest" description="Disordered" evidence="4">
    <location>
        <begin position="1"/>
        <end position="38"/>
    </location>
</feature>
<feature type="region of interest" description="Disordered" evidence="4">
    <location>
        <begin position="425"/>
        <end position="503"/>
    </location>
</feature>
<feature type="short sequence motif" description="Q motif">
    <location>
        <begin position="47"/>
        <end position="75"/>
    </location>
</feature>
<feature type="short sequence motif" description="DEAD box">
    <location>
        <begin position="196"/>
        <end position="199"/>
    </location>
</feature>
<feature type="compositionally biased region" description="Polar residues" evidence="4">
    <location>
        <begin position="7"/>
        <end position="18"/>
    </location>
</feature>
<feature type="compositionally biased region" description="Polar residues" evidence="4">
    <location>
        <begin position="434"/>
        <end position="445"/>
    </location>
</feature>
<feature type="compositionally biased region" description="Polar residues" evidence="4">
    <location>
        <begin position="480"/>
        <end position="497"/>
    </location>
</feature>
<feature type="binding site" evidence="2">
    <location>
        <begin position="91"/>
        <end position="98"/>
    </location>
    <ligand>
        <name>ATP</name>
        <dbReference type="ChEBI" id="CHEBI:30616"/>
    </ligand>
</feature>
<name>DHH1_ASPCL</name>
<protein>
    <recommendedName>
        <fullName>ATP-dependent RNA helicase dhh1</fullName>
        <ecNumber>3.6.4.13</ecNumber>
    </recommendedName>
</protein>
<keyword id="KW-0067">ATP-binding</keyword>
<keyword id="KW-0963">Cytoplasm</keyword>
<keyword id="KW-0347">Helicase</keyword>
<keyword id="KW-0378">Hydrolase</keyword>
<keyword id="KW-0507">mRNA processing</keyword>
<keyword id="KW-0509">mRNA transport</keyword>
<keyword id="KW-0547">Nucleotide-binding</keyword>
<keyword id="KW-1185">Reference proteome</keyword>
<keyword id="KW-0694">RNA-binding</keyword>
<keyword id="KW-0810">Translation regulation</keyword>
<keyword id="KW-0813">Transport</keyword>
<proteinExistence type="inferred from homology"/>
<reference key="1">
    <citation type="journal article" date="2008" name="PLoS Genet.">
        <title>Genomic islands in the pathogenic filamentous fungus Aspergillus fumigatus.</title>
        <authorList>
            <person name="Fedorova N.D."/>
            <person name="Khaldi N."/>
            <person name="Joardar V.S."/>
            <person name="Maiti R."/>
            <person name="Amedeo P."/>
            <person name="Anderson M.J."/>
            <person name="Crabtree J."/>
            <person name="Silva J.C."/>
            <person name="Badger J.H."/>
            <person name="Albarraq A."/>
            <person name="Angiuoli S."/>
            <person name="Bussey H."/>
            <person name="Bowyer P."/>
            <person name="Cotty P.J."/>
            <person name="Dyer P.S."/>
            <person name="Egan A."/>
            <person name="Galens K."/>
            <person name="Fraser-Liggett C.M."/>
            <person name="Haas B.J."/>
            <person name="Inman J.M."/>
            <person name="Kent R."/>
            <person name="Lemieux S."/>
            <person name="Malavazi I."/>
            <person name="Orvis J."/>
            <person name="Roemer T."/>
            <person name="Ronning C.M."/>
            <person name="Sundaram J.P."/>
            <person name="Sutton G."/>
            <person name="Turner G."/>
            <person name="Venter J.C."/>
            <person name="White O.R."/>
            <person name="Whitty B.R."/>
            <person name="Youngman P."/>
            <person name="Wolfe K.H."/>
            <person name="Goldman G.H."/>
            <person name="Wortman J.R."/>
            <person name="Jiang B."/>
            <person name="Denning D.W."/>
            <person name="Nierman W.C."/>
        </authorList>
    </citation>
    <scope>NUCLEOTIDE SEQUENCE [LARGE SCALE GENOMIC DNA]</scope>
    <source>
        <strain>ATCC 1007 / CBS 513.65 / DSM 816 / NCTC 3887 / NRRL 1 / QM 1276 / 107</strain>
    </source>
</reference>
<gene>
    <name type="primary">dhh1</name>
    <name type="ORF">ACLA_033450</name>
</gene>
<sequence length="503" mass="56731">MADALASQLSNTTLGEANSETKWKEQLNVPAKDARPQTEDVTATKGLEFEDFYIKRELMMGIFEAGFEKPSPIQEETIPVALTGRDILARAKNGTGKTAAFVIPTLERINPKSTKTQALILVPTRELALQTSQVCKTLGKHLGINVMVTTGGTGLMDDIIRLNDAVHILVGTPGRVLDLASKGVADLSECPTFVMDEADKLLSPEFTPVIEQLLSFHPKDRQVMLFSATFPLIVKSFKDKHMRNPYEINLMDELTLRGITQYYAFVEEKQKVHCLNTLFSKLQINQSIIFCNSTNRVELLAKKITELGYSCFYSHARMLQQHRNRVFHDFRNGVCRNLVCSDLLTRGIDIQAVNVVINFDFPKNAETYLHRIGRSGRFGHLGLAINLINWEDRFNLYKIEQELGTEIQPIPQNIDKKLYVYDSPETIPRPISNPPQLRQATQSVTAERRHQNHANSGQYQFNRGRGSYRGRGQGQRRSVQNESNKFNHPQGQQSGKSQMAPVS</sequence>
<organism>
    <name type="scientific">Aspergillus clavatus (strain ATCC 1007 / CBS 513.65 / DSM 816 / NCTC 3887 / NRRL 1 / QM 1276 / 107)</name>
    <dbReference type="NCBI Taxonomy" id="344612"/>
    <lineage>
        <taxon>Eukaryota</taxon>
        <taxon>Fungi</taxon>
        <taxon>Dikarya</taxon>
        <taxon>Ascomycota</taxon>
        <taxon>Pezizomycotina</taxon>
        <taxon>Eurotiomycetes</taxon>
        <taxon>Eurotiomycetidae</taxon>
        <taxon>Eurotiales</taxon>
        <taxon>Aspergillaceae</taxon>
        <taxon>Aspergillus</taxon>
        <taxon>Aspergillus subgen. Fumigati</taxon>
    </lineage>
</organism>
<dbReference type="EC" id="3.6.4.13"/>
<dbReference type="EMBL" id="DS027056">
    <property type="protein sequence ID" value="EAW09142.1"/>
    <property type="molecule type" value="Genomic_DNA"/>
</dbReference>
<dbReference type="RefSeq" id="XP_001270568.1">
    <property type="nucleotide sequence ID" value="XM_001270567.1"/>
</dbReference>
<dbReference type="SMR" id="A1CJ18"/>
<dbReference type="STRING" id="344612.A1CJ18"/>
<dbReference type="EnsemblFungi" id="EAW09142">
    <property type="protein sequence ID" value="EAW09142"/>
    <property type="gene ID" value="ACLA_033450"/>
</dbReference>
<dbReference type="GeneID" id="4702815"/>
<dbReference type="KEGG" id="act:ACLA_033450"/>
<dbReference type="VEuPathDB" id="FungiDB:ACLA_033450"/>
<dbReference type="eggNOG" id="KOG0326">
    <property type="taxonomic scope" value="Eukaryota"/>
</dbReference>
<dbReference type="HOGENOM" id="CLU_003041_30_1_1"/>
<dbReference type="OMA" id="TYEDRHT"/>
<dbReference type="OrthoDB" id="10265785at2759"/>
<dbReference type="Proteomes" id="UP000006701">
    <property type="component" value="Unassembled WGS sequence"/>
</dbReference>
<dbReference type="GO" id="GO:0000932">
    <property type="term" value="C:P-body"/>
    <property type="evidence" value="ECO:0007669"/>
    <property type="project" value="UniProtKB-SubCell"/>
</dbReference>
<dbReference type="GO" id="GO:0005524">
    <property type="term" value="F:ATP binding"/>
    <property type="evidence" value="ECO:0007669"/>
    <property type="project" value="UniProtKB-KW"/>
</dbReference>
<dbReference type="GO" id="GO:0016887">
    <property type="term" value="F:ATP hydrolysis activity"/>
    <property type="evidence" value="ECO:0007669"/>
    <property type="project" value="RHEA"/>
</dbReference>
<dbReference type="GO" id="GO:0003723">
    <property type="term" value="F:RNA binding"/>
    <property type="evidence" value="ECO:0007669"/>
    <property type="project" value="UniProtKB-KW"/>
</dbReference>
<dbReference type="GO" id="GO:0003724">
    <property type="term" value="F:RNA helicase activity"/>
    <property type="evidence" value="ECO:0007669"/>
    <property type="project" value="UniProtKB-EC"/>
</dbReference>
<dbReference type="GO" id="GO:0006397">
    <property type="term" value="P:mRNA processing"/>
    <property type="evidence" value="ECO:0007669"/>
    <property type="project" value="UniProtKB-KW"/>
</dbReference>
<dbReference type="GO" id="GO:0051028">
    <property type="term" value="P:mRNA transport"/>
    <property type="evidence" value="ECO:0007669"/>
    <property type="project" value="UniProtKB-KW"/>
</dbReference>
<dbReference type="GO" id="GO:0006417">
    <property type="term" value="P:regulation of translation"/>
    <property type="evidence" value="ECO:0007669"/>
    <property type="project" value="UniProtKB-KW"/>
</dbReference>
<dbReference type="CDD" id="cd17940">
    <property type="entry name" value="DEADc_DDX6"/>
    <property type="match status" value="1"/>
</dbReference>
<dbReference type="CDD" id="cd18787">
    <property type="entry name" value="SF2_C_DEAD"/>
    <property type="match status" value="1"/>
</dbReference>
<dbReference type="FunFam" id="3.40.50.300:FF:000114">
    <property type="entry name" value="ATP-dependent RNA helicase DDX6"/>
    <property type="match status" value="1"/>
</dbReference>
<dbReference type="FunFam" id="3.40.50.300:FF:000364">
    <property type="entry name" value="ATP-dependent RNA helicase DDX6"/>
    <property type="match status" value="1"/>
</dbReference>
<dbReference type="Gene3D" id="3.40.50.300">
    <property type="entry name" value="P-loop containing nucleotide triphosphate hydrolases"/>
    <property type="match status" value="2"/>
</dbReference>
<dbReference type="InterPro" id="IPR011545">
    <property type="entry name" value="DEAD/DEAH_box_helicase_dom"/>
</dbReference>
<dbReference type="InterPro" id="IPR014001">
    <property type="entry name" value="Helicase_ATP-bd"/>
</dbReference>
<dbReference type="InterPro" id="IPR001650">
    <property type="entry name" value="Helicase_C-like"/>
</dbReference>
<dbReference type="InterPro" id="IPR027417">
    <property type="entry name" value="P-loop_NTPase"/>
</dbReference>
<dbReference type="InterPro" id="IPR000629">
    <property type="entry name" value="RNA-helicase_DEAD-box_CS"/>
</dbReference>
<dbReference type="InterPro" id="IPR014014">
    <property type="entry name" value="RNA_helicase_DEAD_Q_motif"/>
</dbReference>
<dbReference type="PANTHER" id="PTHR47960">
    <property type="entry name" value="DEAD-BOX ATP-DEPENDENT RNA HELICASE 50"/>
    <property type="match status" value="1"/>
</dbReference>
<dbReference type="Pfam" id="PF00270">
    <property type="entry name" value="DEAD"/>
    <property type="match status" value="1"/>
</dbReference>
<dbReference type="Pfam" id="PF00271">
    <property type="entry name" value="Helicase_C"/>
    <property type="match status" value="1"/>
</dbReference>
<dbReference type="SMART" id="SM00487">
    <property type="entry name" value="DEXDc"/>
    <property type="match status" value="1"/>
</dbReference>
<dbReference type="SMART" id="SM00490">
    <property type="entry name" value="HELICc"/>
    <property type="match status" value="1"/>
</dbReference>
<dbReference type="SUPFAM" id="SSF52540">
    <property type="entry name" value="P-loop containing nucleoside triphosphate hydrolases"/>
    <property type="match status" value="1"/>
</dbReference>
<dbReference type="PROSITE" id="PS00039">
    <property type="entry name" value="DEAD_ATP_HELICASE"/>
    <property type="match status" value="1"/>
</dbReference>
<dbReference type="PROSITE" id="PS51192">
    <property type="entry name" value="HELICASE_ATP_BIND_1"/>
    <property type="match status" value="1"/>
</dbReference>
<dbReference type="PROSITE" id="PS51194">
    <property type="entry name" value="HELICASE_CTER"/>
    <property type="match status" value="1"/>
</dbReference>
<dbReference type="PROSITE" id="PS51195">
    <property type="entry name" value="Q_MOTIF"/>
    <property type="match status" value="1"/>
</dbReference>
<evidence type="ECO:0000250" key="1"/>
<evidence type="ECO:0000255" key="2">
    <source>
        <dbReference type="PROSITE-ProRule" id="PRU00541"/>
    </source>
</evidence>
<evidence type="ECO:0000255" key="3">
    <source>
        <dbReference type="PROSITE-ProRule" id="PRU00542"/>
    </source>
</evidence>
<evidence type="ECO:0000256" key="4">
    <source>
        <dbReference type="SAM" id="MobiDB-lite"/>
    </source>
</evidence>
<evidence type="ECO:0000305" key="5"/>
<accession>A1CJ18</accession>